<evidence type="ECO:0000256" key="1">
    <source>
        <dbReference type="SAM" id="MobiDB-lite"/>
    </source>
</evidence>
<evidence type="ECO:0000305" key="2"/>
<protein>
    <recommendedName>
        <fullName>UPF0178 protein TP_0845</fullName>
    </recommendedName>
</protein>
<name>Y845_TREPA</name>
<accession>O83817</accession>
<keyword id="KW-1185">Reference proteome</keyword>
<proteinExistence type="inferred from homology"/>
<dbReference type="EMBL" id="AE000520">
    <property type="protein sequence ID" value="AAC65813.1"/>
    <property type="status" value="ALT_INIT"/>
    <property type="molecule type" value="Genomic_DNA"/>
</dbReference>
<dbReference type="PIR" id="E71273">
    <property type="entry name" value="E71273"/>
</dbReference>
<dbReference type="IntAct" id="O83817">
    <property type="interactions" value="2"/>
</dbReference>
<dbReference type="STRING" id="243276.TP_0845"/>
<dbReference type="EnsemblBacteria" id="AAC65813">
    <property type="protein sequence ID" value="AAC65813"/>
    <property type="gene ID" value="TP_0845"/>
</dbReference>
<dbReference type="KEGG" id="tpa:TP_0845"/>
<dbReference type="eggNOG" id="COG1671">
    <property type="taxonomic scope" value="Bacteria"/>
</dbReference>
<dbReference type="HOGENOM" id="CLU_106619_2_0_12"/>
<dbReference type="Proteomes" id="UP000000811">
    <property type="component" value="Chromosome"/>
</dbReference>
<dbReference type="HAMAP" id="MF_00489">
    <property type="entry name" value="UPF0178"/>
    <property type="match status" value="1"/>
</dbReference>
<dbReference type="InterPro" id="IPR003791">
    <property type="entry name" value="UPF0178"/>
</dbReference>
<dbReference type="PANTHER" id="PTHR35146">
    <property type="entry name" value="UPF0178 PROTEIN YAII"/>
    <property type="match status" value="1"/>
</dbReference>
<dbReference type="PANTHER" id="PTHR35146:SF1">
    <property type="entry name" value="UPF0178 PROTEIN YAII"/>
    <property type="match status" value="1"/>
</dbReference>
<dbReference type="Pfam" id="PF02639">
    <property type="entry name" value="DUF188"/>
    <property type="match status" value="1"/>
</dbReference>
<reference key="1">
    <citation type="journal article" date="1998" name="Science">
        <title>Complete genome sequence of Treponema pallidum, the syphilis spirochete.</title>
        <authorList>
            <person name="Fraser C.M."/>
            <person name="Norris S.J."/>
            <person name="Weinstock G.M."/>
            <person name="White O."/>
            <person name="Sutton G.G."/>
            <person name="Dodson R.J."/>
            <person name="Gwinn M.L."/>
            <person name="Hickey E.K."/>
            <person name="Clayton R.A."/>
            <person name="Ketchum K.A."/>
            <person name="Sodergren E."/>
            <person name="Hardham J.M."/>
            <person name="McLeod M.P."/>
            <person name="Salzberg S.L."/>
            <person name="Peterson J.D."/>
            <person name="Khalak H.G."/>
            <person name="Richardson D.L."/>
            <person name="Howell J.K."/>
            <person name="Chidambaram M."/>
            <person name="Utterback T.R."/>
            <person name="McDonald L.A."/>
            <person name="Artiach P."/>
            <person name="Bowman C."/>
            <person name="Cotton M.D."/>
            <person name="Fujii C."/>
            <person name="Garland S.A."/>
            <person name="Hatch B."/>
            <person name="Horst K."/>
            <person name="Roberts K.M."/>
            <person name="Sandusky M."/>
            <person name="Weidman J.F."/>
            <person name="Smith H.O."/>
            <person name="Venter J.C."/>
        </authorList>
    </citation>
    <scope>NUCLEOTIDE SEQUENCE [LARGE SCALE GENOMIC DNA]</scope>
    <source>
        <strain>Nichols</strain>
    </source>
</reference>
<comment type="similarity">
    <text evidence="2">Belongs to the UPF0178 family.</text>
</comment>
<comment type="sequence caution" evidence="2">
    <conflict type="erroneous initiation">
        <sequence resource="EMBL-CDS" id="AAC65813"/>
    </conflict>
</comment>
<gene>
    <name type="ordered locus">TP_0845</name>
</gene>
<feature type="chain" id="PRO_0000176018" description="UPF0178 protein TP_0845">
    <location>
        <begin position="1"/>
        <end position="177"/>
    </location>
</feature>
<feature type="region of interest" description="Disordered" evidence="1">
    <location>
        <begin position="155"/>
        <end position="177"/>
    </location>
</feature>
<sequence>MTLWVDADSCPARVRVLVARAAARLGCVARFVANRPIPLVQSPHCIMVETQPVDQAADRHIIAYARAGDLVVTRDIVLAKAIVDARISVINDRGDVYTEENIRERLSVRNFMYDLRGQGLAPETTSPFGRRDAARFADSLDRETAKLLRLARRREAKTGEEQCDWPSAQGKSQTGRR</sequence>
<organism>
    <name type="scientific">Treponema pallidum (strain Nichols)</name>
    <dbReference type="NCBI Taxonomy" id="243276"/>
    <lineage>
        <taxon>Bacteria</taxon>
        <taxon>Pseudomonadati</taxon>
        <taxon>Spirochaetota</taxon>
        <taxon>Spirochaetia</taxon>
        <taxon>Spirochaetales</taxon>
        <taxon>Treponemataceae</taxon>
        <taxon>Treponema</taxon>
    </lineage>
</organism>